<name>SODC_HALRO</name>
<dbReference type="EC" id="1.15.1.1"/>
<dbReference type="SMR" id="P81926"/>
<dbReference type="iPTMnet" id="P81926"/>
<dbReference type="GO" id="GO:0005737">
    <property type="term" value="C:cytoplasm"/>
    <property type="evidence" value="ECO:0007669"/>
    <property type="project" value="UniProtKB-SubCell"/>
</dbReference>
<dbReference type="GO" id="GO:0005507">
    <property type="term" value="F:copper ion binding"/>
    <property type="evidence" value="ECO:0007669"/>
    <property type="project" value="InterPro"/>
</dbReference>
<dbReference type="GO" id="GO:0004784">
    <property type="term" value="F:superoxide dismutase activity"/>
    <property type="evidence" value="ECO:0007669"/>
    <property type="project" value="UniProtKB-EC"/>
</dbReference>
<dbReference type="CDD" id="cd00305">
    <property type="entry name" value="Cu-Zn_Superoxide_Dismutase"/>
    <property type="match status" value="1"/>
</dbReference>
<dbReference type="FunFam" id="2.60.40.200:FF:000001">
    <property type="entry name" value="Superoxide dismutase [Cu-Zn]"/>
    <property type="match status" value="1"/>
</dbReference>
<dbReference type="Gene3D" id="2.60.40.200">
    <property type="entry name" value="Superoxide dismutase, copper/zinc binding domain"/>
    <property type="match status" value="1"/>
</dbReference>
<dbReference type="InterPro" id="IPR036423">
    <property type="entry name" value="SOD-like_Cu/Zn_dom_sf"/>
</dbReference>
<dbReference type="InterPro" id="IPR024134">
    <property type="entry name" value="SOD_Cu/Zn_/chaperone"/>
</dbReference>
<dbReference type="InterPro" id="IPR018152">
    <property type="entry name" value="SOD_Cu/Zn_BS"/>
</dbReference>
<dbReference type="InterPro" id="IPR001424">
    <property type="entry name" value="SOD_Cu_Zn_dom"/>
</dbReference>
<dbReference type="PANTHER" id="PTHR10003">
    <property type="entry name" value="SUPEROXIDE DISMUTASE CU-ZN -RELATED"/>
    <property type="match status" value="1"/>
</dbReference>
<dbReference type="Pfam" id="PF00080">
    <property type="entry name" value="Sod_Cu"/>
    <property type="match status" value="1"/>
</dbReference>
<dbReference type="PRINTS" id="PR00068">
    <property type="entry name" value="CUZNDISMTASE"/>
</dbReference>
<dbReference type="SUPFAM" id="SSF49329">
    <property type="entry name" value="Cu,Zn superoxide dismutase-like"/>
    <property type="match status" value="1"/>
</dbReference>
<dbReference type="PROSITE" id="PS00087">
    <property type="entry name" value="SOD_CU_ZN_1"/>
    <property type="match status" value="1"/>
</dbReference>
<dbReference type="PROSITE" id="PS00332">
    <property type="entry name" value="SOD_CU_ZN_2"/>
    <property type="match status" value="1"/>
</dbReference>
<feature type="initiator methionine" description="Removed" evidence="2">
    <location>
        <position position="1"/>
    </location>
</feature>
<feature type="chain" id="PRO_0000164079" description="Superoxide dismutase [Cu-Zn]">
    <location>
        <begin position="2"/>
        <end position="152"/>
    </location>
</feature>
<feature type="binding site" evidence="1">
    <location>
        <position position="44"/>
    </location>
    <ligand>
        <name>Cu cation</name>
        <dbReference type="ChEBI" id="CHEBI:23378"/>
        <note>catalytic</note>
    </ligand>
</feature>
<feature type="binding site" evidence="1">
    <location>
        <position position="46"/>
    </location>
    <ligand>
        <name>Cu cation</name>
        <dbReference type="ChEBI" id="CHEBI:23378"/>
        <note>catalytic</note>
    </ligand>
</feature>
<feature type="binding site" evidence="1">
    <location>
        <position position="61"/>
    </location>
    <ligand>
        <name>Cu cation</name>
        <dbReference type="ChEBI" id="CHEBI:23378"/>
        <note>catalytic</note>
    </ligand>
</feature>
<feature type="binding site" evidence="1">
    <location>
        <position position="61"/>
    </location>
    <ligand>
        <name>Zn(2+)</name>
        <dbReference type="ChEBI" id="CHEBI:29105"/>
        <note>structural</note>
    </ligand>
</feature>
<feature type="binding site" evidence="1">
    <location>
        <position position="69"/>
    </location>
    <ligand>
        <name>Zn(2+)</name>
        <dbReference type="ChEBI" id="CHEBI:29105"/>
        <note>structural</note>
    </ligand>
</feature>
<feature type="binding site" evidence="1">
    <location>
        <position position="78"/>
    </location>
    <ligand>
        <name>Zn(2+)</name>
        <dbReference type="ChEBI" id="CHEBI:29105"/>
        <note>structural</note>
    </ligand>
</feature>
<feature type="binding site" evidence="1">
    <location>
        <position position="81"/>
    </location>
    <ligand>
        <name>Zn(2+)</name>
        <dbReference type="ChEBI" id="CHEBI:29105"/>
        <note>structural</note>
    </ligand>
</feature>
<feature type="binding site" evidence="1">
    <location>
        <position position="118"/>
    </location>
    <ligand>
        <name>Cu cation</name>
        <dbReference type="ChEBI" id="CHEBI:23378"/>
        <note>catalytic</note>
    </ligand>
</feature>
<feature type="modified residue" description="N-acetylserine" evidence="2">
    <location>
        <position position="2"/>
    </location>
</feature>
<feature type="disulfide bond" evidence="1">
    <location>
        <begin position="55"/>
        <end position="144"/>
    </location>
</feature>
<reference key="1">
    <citation type="journal article" date="1999" name="Comp. Biochem. Physiol.">
        <title>Primary structure and function of superoxide dismutase from the ascidian Halocynthia roretzi.</title>
        <authorList>
            <person name="Abe Y."/>
            <person name="Ishikawa G."/>
            <person name="Satoh H."/>
            <person name="Azumi K."/>
            <person name="Yokosawa H."/>
        </authorList>
    </citation>
    <scope>PROTEIN SEQUENCE OF 2-152</scope>
    <scope>ACETYLATION AT SER-2</scope>
    <scope>CHARACTERIZATION</scope>
    <source>
        <tissue>Hemocyte</tissue>
        <tissue>Plasma</tissue>
    </source>
</reference>
<comment type="function">
    <text>Destroys radicals which are normally produced within the cells and which are toxic to biological systems. The plasma superoxide dismutase has phagocytosis-stimulating activity and may play an important role in the biological defenses of the organism.</text>
</comment>
<comment type="catalytic activity">
    <reaction>
        <text>2 superoxide + 2 H(+) = H2O2 + O2</text>
        <dbReference type="Rhea" id="RHEA:20696"/>
        <dbReference type="ChEBI" id="CHEBI:15378"/>
        <dbReference type="ChEBI" id="CHEBI:15379"/>
        <dbReference type="ChEBI" id="CHEBI:16240"/>
        <dbReference type="ChEBI" id="CHEBI:18421"/>
        <dbReference type="EC" id="1.15.1.1"/>
    </reaction>
</comment>
<comment type="cofactor">
    <cofactor evidence="1">
        <name>Cu cation</name>
        <dbReference type="ChEBI" id="CHEBI:23378"/>
    </cofactor>
    <text evidence="1">Binds 1 copper ion per subunit.</text>
</comment>
<comment type="cofactor">
    <cofactor evidence="1">
        <name>Zn(2+)</name>
        <dbReference type="ChEBI" id="CHEBI:29105"/>
    </cofactor>
    <text evidence="1">Binds 1 zinc ion per subunit.</text>
</comment>
<comment type="activity regulation">
    <text>Inhibited by KCN and diethyldithiocarbamate.</text>
</comment>
<comment type="subunit">
    <text>Monomer.</text>
</comment>
<comment type="subcellular location">
    <subcellularLocation>
        <location evidence="1">Cytoplasm</location>
    </subcellularLocation>
</comment>
<comment type="similarity">
    <text evidence="3">Belongs to the Cu-Zn superoxide dismutase family.</text>
</comment>
<proteinExistence type="evidence at protein level"/>
<sequence length="152" mass="15620">MSIKAVCVLVGSVKGTLNFKQDAIGSCTVTGEVSGLIPGKHGFHIHEYGDLTNGCTSSGGHFNPFKQIHGAPEDDIRHVGDLGNITADSSGVATVNITDRMISLTGEHSIIGRAVVVHAGEDDLGKGGHEDSKTTGHAGGRLSCGVIGINHL</sequence>
<organism>
    <name type="scientific">Halocynthia roretzi</name>
    <name type="common">Sea squirt</name>
    <name type="synonym">Cynthia roretzi</name>
    <dbReference type="NCBI Taxonomy" id="7729"/>
    <lineage>
        <taxon>Eukaryota</taxon>
        <taxon>Metazoa</taxon>
        <taxon>Chordata</taxon>
        <taxon>Tunicata</taxon>
        <taxon>Ascidiacea</taxon>
        <taxon>Stolidobranchia</taxon>
        <taxon>Pyuridae</taxon>
        <taxon>Halocynthia</taxon>
    </lineage>
</organism>
<evidence type="ECO:0000250" key="1"/>
<evidence type="ECO:0000269" key="2">
    <source>
    </source>
</evidence>
<evidence type="ECO:0000305" key="3"/>
<keyword id="KW-0007">Acetylation</keyword>
<keyword id="KW-0049">Antioxidant</keyword>
<keyword id="KW-0186">Copper</keyword>
<keyword id="KW-0963">Cytoplasm</keyword>
<keyword id="KW-0903">Direct protein sequencing</keyword>
<keyword id="KW-1015">Disulfide bond</keyword>
<keyword id="KW-0479">Metal-binding</keyword>
<keyword id="KW-0560">Oxidoreductase</keyword>
<keyword id="KW-0862">Zinc</keyword>
<protein>
    <recommendedName>
        <fullName>Superoxide dismutase [Cu-Zn]</fullName>
        <ecNumber>1.15.1.1</ecNumber>
    </recommendedName>
</protein>
<accession>P81926</accession>